<dbReference type="EC" id="2.3.2.27" evidence="1"/>
<dbReference type="EMBL" id="CR861381">
    <property type="protein sequence ID" value="CAH93440.1"/>
    <property type="molecule type" value="mRNA"/>
</dbReference>
<dbReference type="RefSeq" id="NP_001124565.1">
    <property type="nucleotide sequence ID" value="NM_001131093.1"/>
</dbReference>
<dbReference type="BMRB" id="Q5R476"/>
<dbReference type="SMR" id="Q5R476"/>
<dbReference type="FunCoup" id="Q5R476">
    <property type="interactions" value="4825"/>
</dbReference>
<dbReference type="STRING" id="9601.ENSPPYP00000007390"/>
<dbReference type="GeneID" id="100169738"/>
<dbReference type="KEGG" id="pon:100169738"/>
<dbReference type="CTD" id="54778"/>
<dbReference type="eggNOG" id="KOG0800">
    <property type="taxonomic scope" value="Eukaryota"/>
</dbReference>
<dbReference type="InParanoid" id="Q5R476"/>
<dbReference type="OrthoDB" id="8062037at2759"/>
<dbReference type="UniPathway" id="UPA00143"/>
<dbReference type="Proteomes" id="UP000001595">
    <property type="component" value="Unplaced"/>
</dbReference>
<dbReference type="GO" id="GO:0005737">
    <property type="term" value="C:cytoplasm"/>
    <property type="evidence" value="ECO:0007669"/>
    <property type="project" value="UniProtKB-SubCell"/>
</dbReference>
<dbReference type="GO" id="GO:0016605">
    <property type="term" value="C:PML body"/>
    <property type="evidence" value="ECO:0007669"/>
    <property type="project" value="UniProtKB-SubCell"/>
</dbReference>
<dbReference type="GO" id="GO:0032184">
    <property type="term" value="F:SUMO polymer binding"/>
    <property type="evidence" value="ECO:0000250"/>
    <property type="project" value="UniProtKB"/>
</dbReference>
<dbReference type="GO" id="GO:0016740">
    <property type="term" value="F:transferase activity"/>
    <property type="evidence" value="ECO:0007669"/>
    <property type="project" value="UniProtKB-KW"/>
</dbReference>
<dbReference type="GO" id="GO:0008270">
    <property type="term" value="F:zinc ion binding"/>
    <property type="evidence" value="ECO:0007669"/>
    <property type="project" value="UniProtKB-KW"/>
</dbReference>
<dbReference type="GO" id="GO:0006281">
    <property type="term" value="P:DNA repair"/>
    <property type="evidence" value="ECO:0007669"/>
    <property type="project" value="UniProtKB-KW"/>
</dbReference>
<dbReference type="GO" id="GO:0016567">
    <property type="term" value="P:protein ubiquitination"/>
    <property type="evidence" value="ECO:0007669"/>
    <property type="project" value="UniProtKB-UniPathway"/>
</dbReference>
<dbReference type="CDD" id="cd16681">
    <property type="entry name" value="RING-H2_RNF111"/>
    <property type="match status" value="1"/>
</dbReference>
<dbReference type="FunFam" id="3.30.40.10:FF:000058">
    <property type="entry name" value="E3 ubiquitin-protein ligase Arkadia isoform X4"/>
    <property type="match status" value="1"/>
</dbReference>
<dbReference type="Gene3D" id="3.30.40.10">
    <property type="entry name" value="Zinc/RING finger domain, C3HC4 (zinc finger)"/>
    <property type="match status" value="1"/>
</dbReference>
<dbReference type="InterPro" id="IPR029306">
    <property type="entry name" value="RNF111_N"/>
</dbReference>
<dbReference type="InterPro" id="IPR001841">
    <property type="entry name" value="Znf_RING"/>
</dbReference>
<dbReference type="InterPro" id="IPR013083">
    <property type="entry name" value="Znf_RING/FYVE/PHD"/>
</dbReference>
<dbReference type="InterPro" id="IPR051073">
    <property type="entry name" value="ZNRF3_Arkadia_E3_ligases"/>
</dbReference>
<dbReference type="PANTHER" id="PTHR16200">
    <property type="entry name" value="RING ZINC FINGER"/>
    <property type="match status" value="1"/>
</dbReference>
<dbReference type="Pfam" id="PF15303">
    <property type="entry name" value="RNF111_N"/>
    <property type="match status" value="1"/>
</dbReference>
<dbReference type="Pfam" id="PF13639">
    <property type="entry name" value="zf-RING_2"/>
    <property type="match status" value="1"/>
</dbReference>
<dbReference type="SMART" id="SM00184">
    <property type="entry name" value="RING"/>
    <property type="match status" value="1"/>
</dbReference>
<dbReference type="SUPFAM" id="SSF57850">
    <property type="entry name" value="RING/U-box"/>
    <property type="match status" value="1"/>
</dbReference>
<dbReference type="PROSITE" id="PS50089">
    <property type="entry name" value="ZF_RING_2"/>
    <property type="match status" value="1"/>
</dbReference>
<comment type="function">
    <text evidence="1 3">E3 ubiquitin-protein ligase (By similarity). Required for mesoderm patterning during embryonic development (By similarity). Acts as an enhancer of the transcriptional responses of the SMAD2/SMAD3 effectors, which are activated downstream of BMP. Acts by mediating ubiquitination and degradation of SMAD inhibitors such as SMAD7, inducing their proteasomal degradation and thereby enhancing the transcriptional activity of TGF-beta and BMP (By similarity). In addition to enhance transcription of SMAD2/SMAD3 effectors, also regulates their turnover by mediating their ubiquitination and subsequent degradation, coupling their activation with degradation, thereby ensuring that only effectors 'in use' are degraded (By similarity). Activates SMAD3/SMAD4-dependent transcription by triggering signal-induced degradation of SNON isoform of SKIL. Associates with UBE2D2 as an E2 enzyme. Specifically binds polysumoylated chains via SUMO interaction motifs (SIMs) and mediates ubiquitination of sumoylated substrates. Catalyzes 'Lys-63'-linked ubiquitination of sumoylated XPC in response to UV irradiation, promoting nucleotide excision repair (By similarity). Mediates ubiquitination and degradation of sumoylated PML (By similarity). The regulation of the BMP-SMAD signaling is however independent of sumoylation and is not dependent of SUMO interaction motifs (SIMs) (By similarity).</text>
</comment>
<comment type="catalytic activity">
    <reaction evidence="1">
        <text>S-ubiquitinyl-[E2 ubiquitin-conjugating enzyme]-L-cysteine + [acceptor protein]-L-lysine = [E2 ubiquitin-conjugating enzyme]-L-cysteine + N(6)-ubiquitinyl-[acceptor protein]-L-lysine.</text>
        <dbReference type="EC" id="2.3.2.27"/>
    </reaction>
</comment>
<comment type="activity regulation">
    <text evidence="2">Binds free ubiquitin non-covalently via its RING-type zinc finger. Ubiquitin-binding leads to enhance the E3 ubiquitin-protein ligase activity by stabilizing the ubiquitin-conjugating enzyme E2 (donor ubiquitin) in the 'closed' conformation and activating ubiquitin transfer.</text>
</comment>
<comment type="pathway">
    <text evidence="1">Protein modification; protein ubiquitination.</text>
</comment>
<comment type="subunit">
    <text evidence="1 3">Monomer. Interacts with SMAD6, SMAD7, AXIN1, AXIN2 and SKIL isoform SNON (By similarity). Interacts with (phosphorylated) SMAD2 and SMAD3 (By similarity). Part of a complex containing RNF111, AXIN1 and SMAD7. Interacts (via SIM domains) with SUMO1 and SUMO2 (By similarity).</text>
</comment>
<comment type="subcellular location">
    <subcellularLocation>
        <location evidence="1">Nucleus</location>
    </subcellularLocation>
    <subcellularLocation>
        <location evidence="1">Cytoplasm</location>
    </subcellularLocation>
    <subcellularLocation>
        <location evidence="3">Nucleus</location>
        <location evidence="3">PML body</location>
    </subcellularLocation>
    <text evidence="1">Upon TGF-beta treatment, translocates from nucleus to cytosol.</text>
</comment>
<comment type="domain">
    <text evidence="1">The SUMO interaction motifs (SIMs) mediates the binding to polysumoylated substrate.</text>
</comment>
<comment type="domain">
    <text evidence="1 2">The RING-type zinc finger mediates the E3 ubiquitin-protein ligase activity and binds directly to free ubiquitin (By similarity). Non-covalent ubiquitin-binding stabilizes the ubiquitin-conjugating enzyme E2 (donor ubiquitin) in the 'closed' conformation and stimulates ubiquitin transfer (By similarity).</text>
</comment>
<comment type="similarity">
    <text evidence="6">Belongs to the Arkadia family.</text>
</comment>
<accession>Q5R476</accession>
<protein>
    <recommendedName>
        <fullName>E3 ubiquitin-protein ligase Arkadia</fullName>
        <ecNumber evidence="1">2.3.2.27</ecNumber>
    </recommendedName>
    <alternativeName>
        <fullName>RING finger protein 111</fullName>
    </alternativeName>
    <alternativeName>
        <fullName evidence="6">RING-type E3 ubiquitin transferase Arkadia</fullName>
    </alternativeName>
</protein>
<sequence>MSQWTPEYNELYTLKVDMKSEIPSDAPKTQESLKGILLHPEPIGAAKSFPAGVEMINSKVGNEFSHLCDDSQKQEKDMNGNQQEQEKSLVVRKKRKSQQAGPSYVQNCVKENQGILGLRQHLGTPSDEDNDSSFSDCLSSPSSSLHFGDSDTVTSDEDKEVSVRHSQTILNAKSRSHSARSHKWPRTETESVSGLLMKRPCLHGSSLRRLPCRKRFVKNNSSQRTQKQKERILMQRKKREVLARRKYALLPSSSSSSENDLSSESSSSSSTEGEEDLFVSASENHQNNPAVPSGSIDEDVVVIEASSTPQVTANEEINVTSTDSEVEIVTVGESYRSRSTLGHSRSHWSQGSSSHASRPQEPRNRSRISTVIQPLRQNAAEVVDLTVDEDEPTVVPTTSARMESQATSASINNSNPSTSEQASDTASAVTGSQPSTVSETSATLTSNSTTGTSIGDDSRRTTSSAVMETGPPAMPRLPSCCPQHSPCGGSSQNHHALGHPHTSCFQQHGHHFQHHHHHHHTPHPAVPVSPSFSDPACPVERPPQVQAPCGANSSSGTSYHEQQALPVDLSNNGIRSHGSGSFHGASAFDPCCPVSSSRAAIFGHQAAAAAPSQPLSSIDGYGSSMVAQPQPQPPPQPSLSSCRHYMPPTYASLTRPLHHQASACPHSHGNPPPQTQPPPQVDYVIPHPVHAFHSQISSHATSHPVAPPPPTHLASTAAPIPQHLPPTHQPISHHIPATAPPAQRLHPHEVMQRMEVRRRRMMQHPTRAHERPPPHPHRMHPNYGHGHHIHVPQTMSSHPRQAPERSAWELGIEAGVTAATYTPGALHPHLAHYHAPPRLHHLQLGALPLMVPDMAGYPHIRYISSGLDGTSFRGPFRGNFEELIHLEERLGNVNRGASQGTIERCTYPHKYKKRKLHCKQDGEEGTEEDTEEKCTICLSILEEGEDVRRLPCMHLFHQVCVDQWLITNKKCPICRVDIEAQLPSES</sequence>
<organism>
    <name type="scientific">Pongo abelii</name>
    <name type="common">Sumatran orangutan</name>
    <name type="synonym">Pongo pygmaeus abelii</name>
    <dbReference type="NCBI Taxonomy" id="9601"/>
    <lineage>
        <taxon>Eukaryota</taxon>
        <taxon>Metazoa</taxon>
        <taxon>Chordata</taxon>
        <taxon>Craniata</taxon>
        <taxon>Vertebrata</taxon>
        <taxon>Euteleostomi</taxon>
        <taxon>Mammalia</taxon>
        <taxon>Eutheria</taxon>
        <taxon>Euarchontoglires</taxon>
        <taxon>Primates</taxon>
        <taxon>Haplorrhini</taxon>
        <taxon>Catarrhini</taxon>
        <taxon>Hominidae</taxon>
        <taxon>Pongo</taxon>
    </lineage>
</organism>
<proteinExistence type="evidence at transcript level"/>
<feature type="chain" id="PRO_0000280692" description="E3 ubiquitin-protein ligase Arkadia">
    <location>
        <begin position="1"/>
        <end position="986"/>
    </location>
</feature>
<feature type="zinc finger region" description="RING-type; atypical" evidence="4">
    <location>
        <begin position="934"/>
        <end position="975"/>
    </location>
</feature>
<feature type="region of interest" description="Disordered" evidence="5">
    <location>
        <begin position="66"/>
        <end position="106"/>
    </location>
</feature>
<feature type="region of interest" description="Disordered" evidence="5">
    <location>
        <begin position="120"/>
        <end position="191"/>
    </location>
</feature>
<feature type="region of interest" description="Interaction with AXIN1" evidence="2">
    <location>
        <begin position="241"/>
        <end position="404"/>
    </location>
</feature>
<feature type="region of interest" description="Disordered" evidence="5">
    <location>
        <begin position="248"/>
        <end position="277"/>
    </location>
</feature>
<feature type="region of interest" description="Disordered" evidence="5">
    <location>
        <begin position="337"/>
        <end position="373"/>
    </location>
</feature>
<feature type="region of interest" description="Disordered" evidence="5">
    <location>
        <begin position="389"/>
        <end position="471"/>
    </location>
</feature>
<feature type="region of interest" description="Disordered" evidence="5">
    <location>
        <begin position="506"/>
        <end position="561"/>
    </location>
</feature>
<feature type="region of interest" description="Disordered" evidence="5">
    <location>
        <begin position="610"/>
        <end position="646"/>
    </location>
</feature>
<feature type="region of interest" description="Disordered" evidence="5">
    <location>
        <begin position="659"/>
        <end position="684"/>
    </location>
</feature>
<feature type="region of interest" description="Disordered" evidence="5">
    <location>
        <begin position="696"/>
        <end position="719"/>
    </location>
</feature>
<feature type="region of interest" description="Ubiquitin binding" evidence="2">
    <location>
        <begin position="907"/>
        <end position="909"/>
    </location>
</feature>
<feature type="region of interest" description="Ubiquitin binding" evidence="2">
    <location>
        <begin position="949"/>
        <end position="953"/>
    </location>
</feature>
<feature type="short sequence motif" description="SUMO interaction motif 1 (SIM)" evidence="1">
    <location>
        <begin position="300"/>
        <end position="304"/>
    </location>
</feature>
<feature type="short sequence motif" description="SUMO interaction motif 2 (SIM)" evidence="1">
    <location>
        <begin position="325"/>
        <end position="331"/>
    </location>
</feature>
<feature type="short sequence motif" description="SUMO interaction motif 3 (SIM)" evidence="1">
    <location>
        <begin position="382"/>
        <end position="386"/>
    </location>
</feature>
<feature type="compositionally biased region" description="Basic and acidic residues" evidence="5">
    <location>
        <begin position="66"/>
        <end position="89"/>
    </location>
</feature>
<feature type="compositionally biased region" description="Low complexity" evidence="5">
    <location>
        <begin position="132"/>
        <end position="151"/>
    </location>
</feature>
<feature type="compositionally biased region" description="Polar residues" evidence="5">
    <location>
        <begin position="164"/>
        <end position="173"/>
    </location>
</feature>
<feature type="compositionally biased region" description="Basic residues" evidence="5">
    <location>
        <begin position="174"/>
        <end position="184"/>
    </location>
</feature>
<feature type="compositionally biased region" description="Low complexity" evidence="5">
    <location>
        <begin position="252"/>
        <end position="271"/>
    </location>
</feature>
<feature type="compositionally biased region" description="Low complexity" evidence="5">
    <location>
        <begin position="347"/>
        <end position="357"/>
    </location>
</feature>
<feature type="compositionally biased region" description="Polar residues" evidence="5">
    <location>
        <begin position="395"/>
        <end position="466"/>
    </location>
</feature>
<feature type="compositionally biased region" description="Basic residues" evidence="5">
    <location>
        <begin position="508"/>
        <end position="522"/>
    </location>
</feature>
<feature type="compositionally biased region" description="Polar residues" evidence="5">
    <location>
        <begin position="551"/>
        <end position="561"/>
    </location>
</feature>
<feature type="compositionally biased region" description="Pro residues" evidence="5">
    <location>
        <begin position="670"/>
        <end position="680"/>
    </location>
</feature>
<feature type="binding site" evidence="2">
    <location>
        <position position="934"/>
    </location>
    <ligand>
        <name>Zn(2+)</name>
        <dbReference type="ChEBI" id="CHEBI:29105"/>
    </ligand>
</feature>
<feature type="binding site" evidence="2">
    <location>
        <position position="937"/>
    </location>
    <ligand>
        <name>Zn(2+)</name>
        <dbReference type="ChEBI" id="CHEBI:29105"/>
    </ligand>
</feature>
<feature type="binding site" evidence="2">
    <location>
        <position position="957"/>
    </location>
    <ligand>
        <name>Zn(2+)</name>
        <dbReference type="ChEBI" id="CHEBI:29105"/>
    </ligand>
</feature>
<feature type="binding site" evidence="2">
    <location>
        <position position="960"/>
    </location>
    <ligand>
        <name>Zn(2+)</name>
        <dbReference type="ChEBI" id="CHEBI:29105"/>
    </ligand>
</feature>
<feature type="cross-link" description="Glycyl lysine isopeptide (Lys-Gly) (interchain with G-Cter in SUMO2)" evidence="1">
    <location>
        <position position="19"/>
    </location>
</feature>
<feature type="cross-link" description="Glycyl lysine isopeptide (Lys-Gly) (interchain with G-Cter in SUMO2)" evidence="1">
    <location>
        <position position="28"/>
    </location>
</feature>
<feature type="cross-link" description="Glycyl lysine isopeptide (Lys-Gly) (interchain with G-Cter in SUMO2)" evidence="1">
    <location>
        <position position="34"/>
    </location>
</feature>
<feature type="cross-link" description="Glycyl lysine isopeptide (Lys-Gly) (interchain with G-Cter in SUMO2)" evidence="1">
    <location>
        <position position="47"/>
    </location>
</feature>
<feature type="cross-link" description="Glycyl lysine isopeptide (Lys-Gly) (interchain with G-Cter in SUMO2)" evidence="1">
    <location>
        <position position="59"/>
    </location>
</feature>
<feature type="cross-link" description="Glycyl lysine isopeptide (Lys-Gly) (interchain with G-Cter in SUMO2)" evidence="1">
    <location>
        <position position="73"/>
    </location>
</feature>
<feature type="cross-link" description="Glycyl lysine isopeptide (Lys-Gly) (interchain with G-Cter in SUMO2)" evidence="1">
    <location>
        <position position="87"/>
    </location>
</feature>
<feature type="cross-link" description="Glycyl lysine isopeptide (Lys-Gly) (interchain with G-Cter in SUMO2)" evidence="1">
    <location>
        <position position="96"/>
    </location>
</feature>
<feature type="cross-link" description="Glycyl lysine isopeptide (Lys-Gly) (interchain with G-Cter in SUMO2)" evidence="1">
    <location>
        <position position="110"/>
    </location>
</feature>
<feature type="cross-link" description="Glycyl lysine isopeptide (Lys-Gly) (interchain with G-Cter in SUMO2)" evidence="1">
    <location>
        <position position="173"/>
    </location>
</feature>
<feature type="cross-link" description="Glycyl lysine isopeptide (Lys-Gly) (interchain with G-Cter in SUMO2)" evidence="1">
    <location>
        <position position="198"/>
    </location>
</feature>
<feature type="cross-link" description="Glycyl lysine isopeptide (Lys-Gly) (interchain with G-Cter in SUMO2)" evidence="1">
    <location>
        <position position="218"/>
    </location>
</feature>
<feature type="cross-link" description="Glycyl lysine isopeptide (Lys-Gly) (interchain with G-Cter in SUMO2)" evidence="1">
    <location>
        <position position="915"/>
    </location>
</feature>
<feature type="cross-link" description="Glycyl lysine isopeptide (Lys-Gly) (interchain with G-Cter in SUMO2)" evidence="1">
    <location>
        <position position="919"/>
    </location>
</feature>
<keyword id="KW-0963">Cytoplasm</keyword>
<keyword id="KW-0217">Developmental protein</keyword>
<keyword id="KW-0227">DNA damage</keyword>
<keyword id="KW-0234">DNA repair</keyword>
<keyword id="KW-1017">Isopeptide bond</keyword>
<keyword id="KW-0479">Metal-binding</keyword>
<keyword id="KW-0539">Nucleus</keyword>
<keyword id="KW-1185">Reference proteome</keyword>
<keyword id="KW-0808">Transferase</keyword>
<keyword id="KW-0832">Ubl conjugation</keyword>
<keyword id="KW-0833">Ubl conjugation pathway</keyword>
<keyword id="KW-0862">Zinc</keyword>
<keyword id="KW-0863">Zinc-finger</keyword>
<name>RN111_PONAB</name>
<reference key="1">
    <citation type="submission" date="2004-11" db="EMBL/GenBank/DDBJ databases">
        <authorList>
            <consortium name="The German cDNA consortium"/>
        </authorList>
    </citation>
    <scope>NUCLEOTIDE SEQUENCE [LARGE SCALE MRNA]</scope>
    <source>
        <tissue>Brain cortex</tissue>
    </source>
</reference>
<evidence type="ECO:0000250" key="1">
    <source>
        <dbReference type="UniProtKB" id="Q6ZNA4"/>
    </source>
</evidence>
<evidence type="ECO:0000250" key="2">
    <source>
        <dbReference type="UniProtKB" id="Q6ZSG1"/>
    </source>
</evidence>
<evidence type="ECO:0000250" key="3">
    <source>
        <dbReference type="UniProtKB" id="Q99ML9"/>
    </source>
</evidence>
<evidence type="ECO:0000255" key="4">
    <source>
        <dbReference type="PROSITE-ProRule" id="PRU00175"/>
    </source>
</evidence>
<evidence type="ECO:0000256" key="5">
    <source>
        <dbReference type="SAM" id="MobiDB-lite"/>
    </source>
</evidence>
<evidence type="ECO:0000305" key="6"/>
<gene>
    <name type="primary">RNF111</name>
</gene>